<reference key="1">
    <citation type="journal article" date="1991" name="J. Gen. Microbiol.">
        <title>A molecular analysis of the 53.3 minute region of the Escherichia coli linkage map.</title>
        <authorList>
            <person name="Andrews S.C."/>
            <person name="Harrison P.M."/>
            <person name="Guest J.R."/>
        </authorList>
    </citation>
    <scope>NUCLEOTIDE SEQUENCE [GENOMIC DNA]</scope>
    <source>
        <strain>K12</strain>
    </source>
</reference>
<reference key="2">
    <citation type="journal article" date="1997" name="DNA Res.">
        <title>Construction of a contiguous 874-kb sequence of the Escherichia coli-K12 genome corresponding to 50.0-68.8 min on the linkage map and analysis of its sequence features.</title>
        <authorList>
            <person name="Yamamoto Y."/>
            <person name="Aiba H."/>
            <person name="Baba T."/>
            <person name="Hayashi K."/>
            <person name="Inada T."/>
            <person name="Isono K."/>
            <person name="Itoh T."/>
            <person name="Kimura S."/>
            <person name="Kitagawa M."/>
            <person name="Makino K."/>
            <person name="Miki T."/>
            <person name="Mitsuhashi N."/>
            <person name="Mizobuchi K."/>
            <person name="Mori H."/>
            <person name="Nakade S."/>
            <person name="Nakamura Y."/>
            <person name="Nashimoto H."/>
            <person name="Oshima T."/>
            <person name="Oyama S."/>
            <person name="Saito N."/>
            <person name="Sampei G."/>
            <person name="Satoh Y."/>
            <person name="Sivasundaram S."/>
            <person name="Tagami H."/>
            <person name="Takahashi H."/>
            <person name="Takeda J."/>
            <person name="Takemoto K."/>
            <person name="Uehara K."/>
            <person name="Wada C."/>
            <person name="Yamagata S."/>
            <person name="Horiuchi T."/>
        </authorList>
    </citation>
    <scope>NUCLEOTIDE SEQUENCE [LARGE SCALE GENOMIC DNA]</scope>
    <source>
        <strain>K12 / W3110 / ATCC 27325 / DSM 5911</strain>
    </source>
</reference>
<reference key="3">
    <citation type="journal article" date="1997" name="Science">
        <title>The complete genome sequence of Escherichia coli K-12.</title>
        <authorList>
            <person name="Blattner F.R."/>
            <person name="Plunkett G. III"/>
            <person name="Bloch C.A."/>
            <person name="Perna N.T."/>
            <person name="Burland V."/>
            <person name="Riley M."/>
            <person name="Collado-Vides J."/>
            <person name="Glasner J.D."/>
            <person name="Rode C.K."/>
            <person name="Mayhew G.F."/>
            <person name="Gregor J."/>
            <person name="Davis N.W."/>
            <person name="Kirkpatrick H.A."/>
            <person name="Goeden M.A."/>
            <person name="Rose D.J."/>
            <person name="Mau B."/>
            <person name="Shao Y."/>
        </authorList>
    </citation>
    <scope>NUCLEOTIDE SEQUENCE [LARGE SCALE GENOMIC DNA]</scope>
    <source>
        <strain>K12 / MG1655 / ATCC 47076</strain>
    </source>
</reference>
<reference key="4">
    <citation type="journal article" date="2006" name="Mol. Syst. Biol.">
        <title>Highly accurate genome sequences of Escherichia coli K-12 strains MG1655 and W3110.</title>
        <authorList>
            <person name="Hayashi K."/>
            <person name="Morooka N."/>
            <person name="Yamamoto Y."/>
            <person name="Fujita K."/>
            <person name="Isono K."/>
            <person name="Choi S."/>
            <person name="Ohtsubo E."/>
            <person name="Baba T."/>
            <person name="Wanner B.L."/>
            <person name="Mori H."/>
            <person name="Horiuchi T."/>
        </authorList>
    </citation>
    <scope>NUCLEOTIDE SEQUENCE [LARGE SCALE GENOMIC DNA]</scope>
    <source>
        <strain>K12 / W3110 / ATCC 27325 / DSM 5911</strain>
    </source>
</reference>
<reference key="5">
    <citation type="journal article" date="1998" name="J. Bacteriol.">
        <title>Promoter characterization and constitutive expression of the Escherichia coli gcvR gene.</title>
        <authorList>
            <person name="Ghrist A.C."/>
            <person name="Stauffer G.V."/>
        </authorList>
    </citation>
    <scope>NUCLEOTIDE SEQUENCE [GENOMIC DNA] OF 1-32</scope>
    <source>
        <strain>K12</strain>
    </source>
</reference>
<reference key="6">
    <citation type="journal article" date="1997" name="Electrophoresis">
        <title>Comparing the predicted and observed properties of proteins encoded in the genome of Escherichia coli K-12.</title>
        <authorList>
            <person name="Link A.J."/>
            <person name="Robison K."/>
            <person name="Church G.M."/>
        </authorList>
    </citation>
    <scope>PROTEIN SEQUENCE OF 1-15</scope>
    <source>
        <strain>K12 / EMG2</strain>
    </source>
</reference>
<reference key="7">
    <citation type="submission" date="1996-02" db="UniProtKB">
        <authorList>
            <person name="Frutiger S."/>
            <person name="Hughes G.J."/>
            <person name="Pasquali C."/>
            <person name="Hochstrasser D.F."/>
        </authorList>
    </citation>
    <scope>PROTEIN SEQUENCE OF 1-11</scope>
    <source>
        <strain>K12 / W3110 / ATCC 27325 / DSM 5911</strain>
    </source>
</reference>
<reference key="8">
    <citation type="journal article" date="2000" name="J. Biol. Chem.">
        <title>Thioredoxin-dependent hydroperoxide peroxidase activity of bacterioferritin comigratory protein (BCP) as a new member of the thiol-specific antioxidant protein (TSA)/Alkyl hydroperoxide peroxidase C (AhpC) family.</title>
        <authorList>
            <person name="Jeong W."/>
            <person name="Cha M.K."/>
            <person name="Kim I.H."/>
        </authorList>
    </citation>
    <scope>CATALYTIC ACTIVITY</scope>
    <scope>ENZYME KINETICS</scope>
    <scope>ACTIVE SITE</scope>
</reference>
<reference key="9">
    <citation type="journal article" date="2009" name="Biochemistry">
        <title>Interrogating the molecular details of the peroxiredoxin activity of the Escherichia coli bacterioferritin comigratory protein using high-resolution mass spectrometry.</title>
        <authorList>
            <person name="Clarke D.J."/>
            <person name="Mackay C.L."/>
            <person name="Campopiano D.J."/>
            <person name="Langridge-Smith P."/>
            <person name="Brown A.R."/>
        </authorList>
    </citation>
    <scope>ACTIVE SITE</scope>
    <scope>DISULFIDE BOND</scope>
</reference>
<reference key="10">
    <citation type="journal article" date="2011" name="Biochemistry">
        <title>Kinetic and thermodynamic features reveal that Escherichia coli BCP is an unusually versatile peroxiredoxin.</title>
        <authorList>
            <person name="Reeves S.A."/>
            <person name="Parsonage D."/>
            <person name="Nelson K.J."/>
            <person name="Poole L.B."/>
        </authorList>
    </citation>
    <scope>FUNCTION</scope>
    <scope>CATALYTIC ACTIVITY</scope>
    <scope>BIOPHYSICOCHEMICAL PROPERTIES</scope>
    <scope>SUBUNIT</scope>
</reference>
<proteinExistence type="evidence at protein level"/>
<dbReference type="EC" id="1.11.1.24" evidence="2 4"/>
<dbReference type="EMBL" id="M63654">
    <property type="protein sequence ID" value="AAB88562.1"/>
    <property type="molecule type" value="Genomic_DNA"/>
</dbReference>
<dbReference type="EMBL" id="U00096">
    <property type="protein sequence ID" value="AAC75533.1"/>
    <property type="molecule type" value="Genomic_DNA"/>
</dbReference>
<dbReference type="EMBL" id="AP009048">
    <property type="protein sequence ID" value="BAA16358.1"/>
    <property type="molecule type" value="Genomic_DNA"/>
</dbReference>
<dbReference type="EMBL" id="AF023337">
    <property type="protein sequence ID" value="AAC46233.1"/>
    <property type="molecule type" value="Genomic_DNA"/>
</dbReference>
<dbReference type="PIR" id="B49749">
    <property type="entry name" value="B49749"/>
</dbReference>
<dbReference type="RefSeq" id="NP_416975.1">
    <property type="nucleotide sequence ID" value="NC_000913.3"/>
</dbReference>
<dbReference type="RefSeq" id="WP_001068682.1">
    <property type="nucleotide sequence ID" value="NZ_STEB01000011.1"/>
</dbReference>
<dbReference type="SMR" id="P0AE52"/>
<dbReference type="BioGRID" id="4260768">
    <property type="interactions" value="46"/>
</dbReference>
<dbReference type="BioGRID" id="851288">
    <property type="interactions" value="2"/>
</dbReference>
<dbReference type="FunCoup" id="P0AE52">
    <property type="interactions" value="767"/>
</dbReference>
<dbReference type="IntAct" id="P0AE52">
    <property type="interactions" value="7"/>
</dbReference>
<dbReference type="STRING" id="511145.b2480"/>
<dbReference type="jPOST" id="P0AE52"/>
<dbReference type="PaxDb" id="511145-b2480"/>
<dbReference type="EnsemblBacteria" id="AAC75533">
    <property type="protein sequence ID" value="AAC75533"/>
    <property type="gene ID" value="b2480"/>
</dbReference>
<dbReference type="GeneID" id="93774658"/>
<dbReference type="GeneID" id="946949"/>
<dbReference type="KEGG" id="ecj:JW2465"/>
<dbReference type="KEGG" id="eco:b2480"/>
<dbReference type="KEGG" id="ecoc:C3026_13765"/>
<dbReference type="PATRIC" id="fig|1411691.4.peg.4259"/>
<dbReference type="EchoBASE" id="EB0106"/>
<dbReference type="eggNOG" id="COG1225">
    <property type="taxonomic scope" value="Bacteria"/>
</dbReference>
<dbReference type="HOGENOM" id="CLU_042529_14_1_6"/>
<dbReference type="InParanoid" id="P0AE52"/>
<dbReference type="OMA" id="PKKFMGK"/>
<dbReference type="OrthoDB" id="9812811at2"/>
<dbReference type="PhylomeDB" id="P0AE52"/>
<dbReference type="BioCyc" id="EcoCyc:EG10108-MONOMER"/>
<dbReference type="BioCyc" id="MetaCyc:EG10108-MONOMER"/>
<dbReference type="BRENDA" id="1.11.1.24">
    <property type="organism ID" value="2026"/>
</dbReference>
<dbReference type="PRO" id="PR:P0AE52"/>
<dbReference type="Proteomes" id="UP000000625">
    <property type="component" value="Chromosome"/>
</dbReference>
<dbReference type="GO" id="GO:0005737">
    <property type="term" value="C:cytoplasm"/>
    <property type="evidence" value="ECO:0000318"/>
    <property type="project" value="GO_Central"/>
</dbReference>
<dbReference type="GO" id="GO:0005829">
    <property type="term" value="C:cytosol"/>
    <property type="evidence" value="ECO:0000314"/>
    <property type="project" value="EcoCyc"/>
</dbReference>
<dbReference type="GO" id="GO:0032843">
    <property type="term" value="F:hydroperoxide reductase activity"/>
    <property type="evidence" value="ECO:0000314"/>
    <property type="project" value="EcoCyc"/>
</dbReference>
<dbReference type="GO" id="GO:0008379">
    <property type="term" value="F:thioredoxin peroxidase activity"/>
    <property type="evidence" value="ECO:0000314"/>
    <property type="project" value="EcoCyc"/>
</dbReference>
<dbReference type="GO" id="GO:0045454">
    <property type="term" value="P:cell redox homeostasis"/>
    <property type="evidence" value="ECO:0000318"/>
    <property type="project" value="GO_Central"/>
</dbReference>
<dbReference type="GO" id="GO:0034599">
    <property type="term" value="P:cellular response to oxidative stress"/>
    <property type="evidence" value="ECO:0000318"/>
    <property type="project" value="GO_Central"/>
</dbReference>
<dbReference type="GO" id="GO:0006979">
    <property type="term" value="P:response to oxidative stress"/>
    <property type="evidence" value="ECO:0000315"/>
    <property type="project" value="EcoCyc"/>
</dbReference>
<dbReference type="CDD" id="cd03017">
    <property type="entry name" value="PRX_BCP"/>
    <property type="match status" value="1"/>
</dbReference>
<dbReference type="FunFam" id="3.40.30.10:FF:000007">
    <property type="entry name" value="Thioredoxin-dependent thiol peroxidase"/>
    <property type="match status" value="1"/>
</dbReference>
<dbReference type="Gene3D" id="3.40.30.10">
    <property type="entry name" value="Glutaredoxin"/>
    <property type="match status" value="1"/>
</dbReference>
<dbReference type="InterPro" id="IPR000866">
    <property type="entry name" value="AhpC/TSA"/>
</dbReference>
<dbReference type="InterPro" id="IPR024706">
    <property type="entry name" value="Peroxiredoxin_AhpC-typ"/>
</dbReference>
<dbReference type="InterPro" id="IPR050924">
    <property type="entry name" value="Peroxiredoxin_BCP/PrxQ"/>
</dbReference>
<dbReference type="InterPro" id="IPR036249">
    <property type="entry name" value="Thioredoxin-like_sf"/>
</dbReference>
<dbReference type="InterPro" id="IPR013766">
    <property type="entry name" value="Thioredoxin_domain"/>
</dbReference>
<dbReference type="NCBIfam" id="NF006960">
    <property type="entry name" value="PRK09437.1"/>
    <property type="match status" value="1"/>
</dbReference>
<dbReference type="PANTHER" id="PTHR42801:SF4">
    <property type="entry name" value="AHPC_TSA FAMILY PROTEIN"/>
    <property type="match status" value="1"/>
</dbReference>
<dbReference type="PANTHER" id="PTHR42801">
    <property type="entry name" value="THIOREDOXIN-DEPENDENT PEROXIDE REDUCTASE"/>
    <property type="match status" value="1"/>
</dbReference>
<dbReference type="Pfam" id="PF00578">
    <property type="entry name" value="AhpC-TSA"/>
    <property type="match status" value="1"/>
</dbReference>
<dbReference type="PIRSF" id="PIRSF000239">
    <property type="entry name" value="AHPC"/>
    <property type="match status" value="1"/>
</dbReference>
<dbReference type="SUPFAM" id="SSF52833">
    <property type="entry name" value="Thioredoxin-like"/>
    <property type="match status" value="1"/>
</dbReference>
<dbReference type="PROSITE" id="PS51352">
    <property type="entry name" value="THIOREDOXIN_2"/>
    <property type="match status" value="1"/>
</dbReference>
<comment type="function">
    <text evidence="4">Thiol-specific peroxidase that catalyzes the reduction of hydrogen peroxide and organic hydroperoxides to water and alcohols, respectively. Plays a role in cell protection against oxidative stress by detoxifying peroxides and as sensor of hydrogen peroxide-mediated signaling events.</text>
</comment>
<comment type="catalytic activity">
    <reaction evidence="2 4">
        <text>a hydroperoxide + [thioredoxin]-dithiol = an alcohol + [thioredoxin]-disulfide + H2O</text>
        <dbReference type="Rhea" id="RHEA:62620"/>
        <dbReference type="Rhea" id="RHEA-COMP:10698"/>
        <dbReference type="Rhea" id="RHEA-COMP:10700"/>
        <dbReference type="ChEBI" id="CHEBI:15377"/>
        <dbReference type="ChEBI" id="CHEBI:29950"/>
        <dbReference type="ChEBI" id="CHEBI:30879"/>
        <dbReference type="ChEBI" id="CHEBI:35924"/>
        <dbReference type="ChEBI" id="CHEBI:50058"/>
        <dbReference type="EC" id="1.11.1.24"/>
    </reaction>
</comment>
<comment type="biophysicochemical properties">
    <kinetics>
        <KM evidence="4">76.1 uM for H(2)O(2) (using glutathione Grx1 as electron donor)</KM>
        <KM evidence="4">99.5 uM for cumene hydroperoxide (using glutathione Grx1 as electron donor)</KM>
        <KM evidence="4">6800 uM for tert-butyl hydroperoxide (using glutathione Grx1 as electron donor)</KM>
        <KM evidence="4">14.6 uM for H(2)O(2) (using thioredoxin Trx1 as electron donor)</KM>
        <KM evidence="4">21.6 uM for cumene hydroperoxide (using thioredoxin Trx1 as electron donor)</KM>
        <KM evidence="4">574 uM for tert-butyl hydroperoxide (using thioredoxin Trx1 as electron donor)</KM>
    </kinetics>
</comment>
<comment type="subunit">
    <text evidence="4">Monomer.</text>
</comment>
<comment type="miscellaneous">
    <text evidence="6">The active site is a conserved redox-active cysteine residue, the peroxidatic cysteine (C(P)), which makes the nucleophilic attack on the peroxide substrate. The peroxide oxidizes the C(P)-SH to cysteine sulfenic acid (C(P)-SOH), which then reacts with another cysteine residue, the resolving cysteine (C(R)), to form a disulfide bridge. The disulfide is subsequently reduced by an appropriate electron donor to complete the catalytic cycle. In this atypical 2-Cys peroxiredoxin, C(R) is present in the same subunit to form an intramolecular disulfide. The disulfide is subsequently reduced by thioredoxin.</text>
</comment>
<comment type="similarity">
    <text evidence="5">Belongs to the peroxiredoxin family. BCP/PrxQ subfamily.</text>
</comment>
<gene>
    <name type="primary">bcp</name>
    <name type="ordered locus">b2480</name>
    <name type="ordered locus">JW2465</name>
</gene>
<name>BCP_ECOLI</name>
<accession>P0AE52</accession>
<accession>P23480</accession>
<keyword id="KW-0049">Antioxidant</keyword>
<keyword id="KW-0903">Direct protein sequencing</keyword>
<keyword id="KW-1015">Disulfide bond</keyword>
<keyword id="KW-0560">Oxidoreductase</keyword>
<keyword id="KW-0575">Peroxidase</keyword>
<keyword id="KW-0676">Redox-active center</keyword>
<keyword id="KW-1185">Reference proteome</keyword>
<organism>
    <name type="scientific">Escherichia coli (strain K12)</name>
    <dbReference type="NCBI Taxonomy" id="83333"/>
    <lineage>
        <taxon>Bacteria</taxon>
        <taxon>Pseudomonadati</taxon>
        <taxon>Pseudomonadota</taxon>
        <taxon>Gammaproteobacteria</taxon>
        <taxon>Enterobacterales</taxon>
        <taxon>Enterobacteriaceae</taxon>
        <taxon>Escherichia</taxon>
    </lineage>
</organism>
<feature type="chain" id="PRO_0000135134" description="Peroxiredoxin Bcp">
    <location>
        <begin position="1"/>
        <end position="156"/>
    </location>
</feature>
<feature type="domain" description="Thioredoxin" evidence="1">
    <location>
        <begin position="4"/>
        <end position="156"/>
    </location>
</feature>
<feature type="active site" description="Cysteine sulfenic acid (-SOH) intermediate" evidence="2 3">
    <location>
        <position position="46"/>
    </location>
</feature>
<feature type="disulfide bond" description="Redox-active" evidence="3">
    <location>
        <begin position="46"/>
        <end position="51"/>
    </location>
</feature>
<sequence>MNPLKAGDIAPKFSLPDQDGEQVNLTDFQGQRVLVYFYPKAMTPGCTVQACGLRDNMDELKKAGVDVLGISTDKPEKLSRFAEKELLNFTLLSDEDHQVCEQFGVWGEKSFMGKTYDGIHRISFLIDADGKIEHVFDDFKTSNHHDVVLNWLKEHA</sequence>
<evidence type="ECO:0000255" key="1">
    <source>
        <dbReference type="PROSITE-ProRule" id="PRU00691"/>
    </source>
</evidence>
<evidence type="ECO:0000269" key="2">
    <source>
    </source>
</evidence>
<evidence type="ECO:0000269" key="3">
    <source>
    </source>
</evidence>
<evidence type="ECO:0000269" key="4">
    <source>
    </source>
</evidence>
<evidence type="ECO:0000305" key="5"/>
<evidence type="ECO:0000305" key="6">
    <source>
    </source>
</evidence>
<protein>
    <recommendedName>
        <fullName>Peroxiredoxin Bcp</fullName>
        <ecNumber evidence="2 4">1.11.1.24</ecNumber>
    </recommendedName>
    <alternativeName>
        <fullName>Bacterioferritin comigratory protein</fullName>
    </alternativeName>
    <alternativeName>
        <fullName>Thioredoxin peroxidase</fullName>
    </alternativeName>
    <alternativeName>
        <fullName evidence="5">Thioredoxin-dependent peroxiredoxin Bcp</fullName>
    </alternativeName>
</protein>